<gene>
    <name evidence="1" type="primary">rpl16</name>
</gene>
<feature type="chain" id="PRO_0000354626" description="Large ribosomal subunit protein uL16c">
    <location>
        <begin position="1"/>
        <end position="139"/>
    </location>
</feature>
<comment type="subunit">
    <text evidence="1">Part of the 50S ribosomal subunit.</text>
</comment>
<comment type="subcellular location">
    <subcellularLocation>
        <location>Plastid</location>
        <location>Chloroplast</location>
    </subcellularLocation>
</comment>
<comment type="similarity">
    <text evidence="1">Belongs to the universal ribosomal protein uL16 family.</text>
</comment>
<organism>
    <name type="scientific">Cryptomeria japonica</name>
    <name type="common">Japanese cedar</name>
    <name type="synonym">Cupressus japonica</name>
    <dbReference type="NCBI Taxonomy" id="3369"/>
    <lineage>
        <taxon>Eukaryota</taxon>
        <taxon>Viridiplantae</taxon>
        <taxon>Streptophyta</taxon>
        <taxon>Embryophyta</taxon>
        <taxon>Tracheophyta</taxon>
        <taxon>Spermatophyta</taxon>
        <taxon>Pinopsida</taxon>
        <taxon>Pinidae</taxon>
        <taxon>Conifers II</taxon>
        <taxon>Cupressales</taxon>
        <taxon>Cupressaceae</taxon>
        <taxon>Cryptomeria</taxon>
    </lineage>
</organism>
<proteinExistence type="inferred from homology"/>
<name>RK16_CRYJA</name>
<reference key="1">
    <citation type="journal article" date="2008" name="BMC Plant Biol.">
        <title>Complete nucleotide sequence of the Cryptomeria japonica D. Don. chloroplast genome and comparative chloroplast genomics: diversified genomic structure of coniferous species.</title>
        <authorList>
            <person name="Hirao T."/>
            <person name="Watanabe A."/>
            <person name="Kurita M."/>
            <person name="Kondo T."/>
            <person name="Takata K."/>
        </authorList>
    </citation>
    <scope>NUCLEOTIDE SEQUENCE [LARGE SCALE GENOMIC DNA]</scope>
</reference>
<keyword id="KW-0150">Chloroplast</keyword>
<keyword id="KW-0934">Plastid</keyword>
<keyword id="KW-0687">Ribonucleoprotein</keyword>
<keyword id="KW-0689">Ribosomal protein</keyword>
<geneLocation type="chloroplast"/>
<sequence length="139" mass="15920">MLSPKRTKFRHQHRGRIKGISSRGNRICFGRFALQALEPVWITSGQIEAGRRAITRYARRGVKIWIRIFPDKPIRTRPAEIRMGSGKAKGSPEYWVSVVKPGRILYEISGVSETIARAAFQIVAYKMPIHTKFITSLRK</sequence>
<accession>B1VKD3</accession>
<evidence type="ECO:0000255" key="1">
    <source>
        <dbReference type="HAMAP-Rule" id="MF_01342"/>
    </source>
</evidence>
<evidence type="ECO:0000305" key="2"/>
<dbReference type="EMBL" id="AP009377">
    <property type="protein sequence ID" value="BAG16644.1"/>
    <property type="molecule type" value="Genomic_DNA"/>
</dbReference>
<dbReference type="RefSeq" id="YP_001806646.1">
    <property type="nucleotide sequence ID" value="NC_010548.1"/>
</dbReference>
<dbReference type="SMR" id="B1VKD3"/>
<dbReference type="GeneID" id="6166538"/>
<dbReference type="KEGG" id="cjf:6166538"/>
<dbReference type="OrthoDB" id="34872at2759"/>
<dbReference type="GO" id="GO:0009507">
    <property type="term" value="C:chloroplast"/>
    <property type="evidence" value="ECO:0007669"/>
    <property type="project" value="UniProtKB-SubCell"/>
</dbReference>
<dbReference type="GO" id="GO:0005762">
    <property type="term" value="C:mitochondrial large ribosomal subunit"/>
    <property type="evidence" value="ECO:0007669"/>
    <property type="project" value="TreeGrafter"/>
</dbReference>
<dbReference type="GO" id="GO:0019843">
    <property type="term" value="F:rRNA binding"/>
    <property type="evidence" value="ECO:0007669"/>
    <property type="project" value="InterPro"/>
</dbReference>
<dbReference type="GO" id="GO:0003735">
    <property type="term" value="F:structural constituent of ribosome"/>
    <property type="evidence" value="ECO:0007669"/>
    <property type="project" value="InterPro"/>
</dbReference>
<dbReference type="GO" id="GO:0032543">
    <property type="term" value="P:mitochondrial translation"/>
    <property type="evidence" value="ECO:0007669"/>
    <property type="project" value="TreeGrafter"/>
</dbReference>
<dbReference type="CDD" id="cd01433">
    <property type="entry name" value="Ribosomal_L16_L10e"/>
    <property type="match status" value="1"/>
</dbReference>
<dbReference type="FunFam" id="3.90.1170.10:FF:000001">
    <property type="entry name" value="50S ribosomal protein L16"/>
    <property type="match status" value="1"/>
</dbReference>
<dbReference type="Gene3D" id="3.90.1170.10">
    <property type="entry name" value="Ribosomal protein L10e/L16"/>
    <property type="match status" value="1"/>
</dbReference>
<dbReference type="HAMAP" id="MF_01342">
    <property type="entry name" value="Ribosomal_uL16"/>
    <property type="match status" value="1"/>
</dbReference>
<dbReference type="InterPro" id="IPR047873">
    <property type="entry name" value="Ribosomal_uL16"/>
</dbReference>
<dbReference type="InterPro" id="IPR000114">
    <property type="entry name" value="Ribosomal_uL16_bact-type"/>
</dbReference>
<dbReference type="InterPro" id="IPR016180">
    <property type="entry name" value="Ribosomal_uL16_dom"/>
</dbReference>
<dbReference type="InterPro" id="IPR036920">
    <property type="entry name" value="Ribosomal_uL16_sf"/>
</dbReference>
<dbReference type="NCBIfam" id="TIGR01164">
    <property type="entry name" value="rplP_bact"/>
    <property type="match status" value="1"/>
</dbReference>
<dbReference type="PANTHER" id="PTHR12220">
    <property type="entry name" value="50S/60S RIBOSOMAL PROTEIN L16"/>
    <property type="match status" value="1"/>
</dbReference>
<dbReference type="PANTHER" id="PTHR12220:SF13">
    <property type="entry name" value="LARGE RIBOSOMAL SUBUNIT PROTEIN UL16M"/>
    <property type="match status" value="1"/>
</dbReference>
<dbReference type="Pfam" id="PF00252">
    <property type="entry name" value="Ribosomal_L16"/>
    <property type="match status" value="1"/>
</dbReference>
<dbReference type="PRINTS" id="PR00060">
    <property type="entry name" value="RIBOSOMALL16"/>
</dbReference>
<dbReference type="SUPFAM" id="SSF54686">
    <property type="entry name" value="Ribosomal protein L16p/L10e"/>
    <property type="match status" value="1"/>
</dbReference>
<protein>
    <recommendedName>
        <fullName evidence="1">Large ribosomal subunit protein uL16c</fullName>
    </recommendedName>
    <alternativeName>
        <fullName evidence="2">50S ribosomal protein L16, chloroplastic</fullName>
    </alternativeName>
</protein>